<protein>
    <recommendedName>
        <fullName evidence="1">UPF0391 membrane protein YtjA</fullName>
    </recommendedName>
</protein>
<gene>
    <name evidence="1" type="primary">ytjA</name>
    <name type="ordered locus">SPC_4698</name>
</gene>
<keyword id="KW-1003">Cell membrane</keyword>
<keyword id="KW-0472">Membrane</keyword>
<keyword id="KW-0812">Transmembrane</keyword>
<keyword id="KW-1133">Transmembrane helix</keyword>
<feature type="chain" id="PRO_1000166689" description="UPF0391 membrane protein YtjA">
    <location>
        <begin position="1"/>
        <end position="53"/>
    </location>
</feature>
<feature type="transmembrane region" description="Helical" evidence="1">
    <location>
        <begin position="4"/>
        <end position="24"/>
    </location>
</feature>
<feature type="transmembrane region" description="Helical" evidence="1">
    <location>
        <begin position="30"/>
        <end position="48"/>
    </location>
</feature>
<dbReference type="EMBL" id="CP000857">
    <property type="protein sequence ID" value="ACN48741.1"/>
    <property type="molecule type" value="Genomic_DNA"/>
</dbReference>
<dbReference type="RefSeq" id="WP_000490276.1">
    <property type="nucleotide sequence ID" value="NC_012125.1"/>
</dbReference>
<dbReference type="KEGG" id="sei:SPC_4698"/>
<dbReference type="HOGENOM" id="CLU_187346_2_0_6"/>
<dbReference type="Proteomes" id="UP000001599">
    <property type="component" value="Chromosome"/>
</dbReference>
<dbReference type="GO" id="GO:0005886">
    <property type="term" value="C:plasma membrane"/>
    <property type="evidence" value="ECO:0007669"/>
    <property type="project" value="UniProtKB-SubCell"/>
</dbReference>
<dbReference type="HAMAP" id="MF_01361">
    <property type="entry name" value="UPF0391"/>
    <property type="match status" value="1"/>
</dbReference>
<dbReference type="InterPro" id="IPR009760">
    <property type="entry name" value="DUF1328"/>
</dbReference>
<dbReference type="NCBIfam" id="NF010229">
    <property type="entry name" value="PRK13682.1-4"/>
    <property type="match status" value="1"/>
</dbReference>
<dbReference type="NCBIfam" id="NF010230">
    <property type="entry name" value="PRK13682.1-5"/>
    <property type="match status" value="1"/>
</dbReference>
<dbReference type="Pfam" id="PF07043">
    <property type="entry name" value="DUF1328"/>
    <property type="match status" value="1"/>
</dbReference>
<dbReference type="PIRSF" id="PIRSF036466">
    <property type="entry name" value="UCP036466"/>
    <property type="match status" value="1"/>
</dbReference>
<evidence type="ECO:0000255" key="1">
    <source>
        <dbReference type="HAMAP-Rule" id="MF_01361"/>
    </source>
</evidence>
<comment type="subcellular location">
    <subcellularLocation>
        <location evidence="1">Cell membrane</location>
        <topology evidence="1">Multi-pass membrane protein</topology>
    </subcellularLocation>
</comment>
<comment type="similarity">
    <text evidence="1">Belongs to the UPF0391 family.</text>
</comment>
<reference key="1">
    <citation type="journal article" date="2009" name="PLoS ONE">
        <title>Salmonella paratyphi C: genetic divergence from Salmonella choleraesuis and pathogenic convergence with Salmonella typhi.</title>
        <authorList>
            <person name="Liu W.-Q."/>
            <person name="Feng Y."/>
            <person name="Wang Y."/>
            <person name="Zou Q.-H."/>
            <person name="Chen F."/>
            <person name="Guo J.-T."/>
            <person name="Peng Y.-H."/>
            <person name="Jin Y."/>
            <person name="Li Y.-G."/>
            <person name="Hu S.-N."/>
            <person name="Johnston R.N."/>
            <person name="Liu G.-R."/>
            <person name="Liu S.-L."/>
        </authorList>
    </citation>
    <scope>NUCLEOTIDE SEQUENCE [LARGE SCALE GENOMIC DNA]</scope>
    <source>
        <strain>RKS4594</strain>
    </source>
</reference>
<organism>
    <name type="scientific">Salmonella paratyphi C (strain RKS4594)</name>
    <dbReference type="NCBI Taxonomy" id="476213"/>
    <lineage>
        <taxon>Bacteria</taxon>
        <taxon>Pseudomonadati</taxon>
        <taxon>Pseudomonadota</taxon>
        <taxon>Gammaproteobacteria</taxon>
        <taxon>Enterobacterales</taxon>
        <taxon>Enterobacteriaceae</taxon>
        <taxon>Salmonella</taxon>
    </lineage>
</organism>
<name>YTJA_SALPC</name>
<accession>C0Q7L8</accession>
<sequence>MFRWGIIFLVIALIAAALGFGGLAGTAAGAAKIVFVVGIVLFLVSLFMGRKRP</sequence>
<proteinExistence type="inferred from homology"/>